<gene>
    <name type="primary">16</name>
</gene>
<feature type="chain" id="PRO_0000106600" description="DNA packaging protein">
    <location>
        <begin position="1"/>
        <end position="321"/>
    </location>
</feature>
<feature type="region of interest" description="ATPase" evidence="1">
    <location>
        <begin position="1"/>
        <end position="196"/>
    </location>
</feature>
<feature type="region of interest" description="DNA-binding" evidence="1">
    <location>
        <begin position="222"/>
        <end position="321"/>
    </location>
</feature>
<feature type="binding site" evidence="2">
    <location>
        <begin position="13"/>
        <end position="20"/>
    </location>
    <ligand>
        <name>ATP</name>
        <dbReference type="ChEBI" id="CHEBI:30616"/>
    </ligand>
</feature>
<protein>
    <recommendedName>
        <fullName evidence="1">DNA packaging protein</fullName>
    </recommendedName>
    <alternativeName>
        <fullName evidence="1">ATPase gp16</fullName>
        <ecNumber evidence="1">3.6.4.-</ecNumber>
    </alternativeName>
    <alternativeName>
        <fullName>Gene product 16</fullName>
        <shortName>gp16</shortName>
    </alternativeName>
    <alternativeName>
        <fullName>Protein p16</fullName>
    </alternativeName>
</protein>
<name>PKG16_BPB03</name>
<organismHost>
    <name type="scientific">Bacillus subtilis</name>
    <dbReference type="NCBI Taxonomy" id="1423"/>
</organismHost>
<organism>
    <name type="scientific">Bacillus phage B103</name>
    <name type="common">Bacteriophage B103</name>
    <dbReference type="NCBI Taxonomy" id="2994042"/>
    <lineage>
        <taxon>Viruses</taxon>
        <taxon>Duplodnaviria</taxon>
        <taxon>Heunggongvirae</taxon>
        <taxon>Uroviricota</taxon>
        <taxon>Caudoviricetes</taxon>
        <taxon>Salasmaviridae</taxon>
        <taxon>Picovirinae</taxon>
        <taxon>Beecentumtrevirus</taxon>
        <taxon>Beecentumtrevirus B103</taxon>
    </lineage>
</organism>
<proteinExistence type="inferred from homology"/>
<comment type="function">
    <text evidence="1">ATPase required for the genome encapsidation reaction. Part of the active packaging motor via the binding to the packaging RNA (pRNA), itself fixed to the head-tail connector at the unique portal vertex of the prohead. Binds and supercoils the pre-formed, unit-length DNA bound to gp3 to produce an initiation complex for DNA packaging. Provides the energy to actively pump the viral DNA into the prohead. Approximately one molecule of ATP is used in the packaging of 2 bp of viral DNA. ATP hydrolysis results in a conformational change that causes the arginine/lysine finger of one subunit to move into the active site of its neighbor, where it interacts with the negatively charged oxygens on the gamma-phosphate of ATP. After packaging, the ATPase and the pRNA are released from the prohead.</text>
</comment>
<comment type="catalytic activity">
    <reaction evidence="1">
        <text>ATP + H2O = ADP + phosphate + H(+)</text>
        <dbReference type="Rhea" id="RHEA:13065"/>
        <dbReference type="ChEBI" id="CHEBI:15377"/>
        <dbReference type="ChEBI" id="CHEBI:15378"/>
        <dbReference type="ChEBI" id="CHEBI:30616"/>
        <dbReference type="ChEBI" id="CHEBI:43474"/>
        <dbReference type="ChEBI" id="CHEBI:456216"/>
    </reaction>
</comment>
<comment type="subunit">
    <text evidence="1">Homopentamer. Interacts with the packaging RNA (pRNA). Part of a DNA-gp3-gp16 complex.</text>
</comment>
<comment type="domain">
    <text evidence="1">The N-terminus contains the ATPase activity and the C-terminus (CTD) binds DNA. The CTD is likely a vestigial nuclease that has lost its hydrolytic capability since Phi-29 is not a concatamer that neads cleavage.</text>
</comment>
<comment type="similarity">
    <text evidence="3">Belongs to the phi29likevirus gp16 family.</text>
</comment>
<accession>Q37897</accession>
<dbReference type="EC" id="3.6.4.-" evidence="1"/>
<dbReference type="EMBL" id="X99260">
    <property type="protein sequence ID" value="CAA67647.1"/>
    <property type="molecule type" value="Genomic_DNA"/>
</dbReference>
<dbReference type="RefSeq" id="NP_690650.1">
    <property type="nucleotide sequence ID" value="NC_004165.1"/>
</dbReference>
<dbReference type="SMR" id="Q37897"/>
<dbReference type="KEGG" id="vg:955369"/>
<dbReference type="Proteomes" id="UP000000971">
    <property type="component" value="Segment"/>
</dbReference>
<dbReference type="GO" id="GO:0005524">
    <property type="term" value="F:ATP binding"/>
    <property type="evidence" value="ECO:0007669"/>
    <property type="project" value="UniProtKB-KW"/>
</dbReference>
<dbReference type="GO" id="GO:0016887">
    <property type="term" value="F:ATP hydrolysis activity"/>
    <property type="evidence" value="ECO:0007669"/>
    <property type="project" value="RHEA"/>
</dbReference>
<dbReference type="Gene3D" id="3.40.50.300">
    <property type="entry name" value="P-loop containing nucleotide triphosphate hydrolases"/>
    <property type="match status" value="1"/>
</dbReference>
<dbReference type="InterPro" id="IPR027417">
    <property type="entry name" value="P-loop_NTPase"/>
</dbReference>
<dbReference type="InterPro" id="IPR008784">
    <property type="entry name" value="Podovirus_Gp16"/>
</dbReference>
<dbReference type="Pfam" id="PF05894">
    <property type="entry name" value="Podovirus_Gp16"/>
    <property type="match status" value="1"/>
</dbReference>
<dbReference type="SUPFAM" id="SSF52540">
    <property type="entry name" value="P-loop containing nucleoside triphosphate hydrolases"/>
    <property type="match status" value="1"/>
</dbReference>
<reference key="1">
    <citation type="journal article" date="1997" name="Gene">
        <title>Bacteriophage B103: complete DNA sequence of its genome and relationship to other Bacillus phages.</title>
        <authorList>
            <person name="Pecenkova T."/>
            <person name="Benes V."/>
            <person name="Paces J."/>
            <person name="Vlcek C."/>
            <person name="Paces V."/>
        </authorList>
    </citation>
    <scope>NUCLEOTIDE SEQUENCE [LARGE SCALE GENOMIC DNA]</scope>
</reference>
<sequence length="321" mass="37651">MLSYDRILNFVIGARGIGKSYAMKKHPIKRFIKHGEQFIYVRRYKPELKKIGNYFNDIAQEFPNHEFKVKGRQFCIDGKLTGWAIPLSAWQSEKSNAYPMVTTIIFDEFIRERDNSGYIPNEVDALLNLMDTVFRTRENGRCICLSNAVSIINPYFVYFGLVPDINKRFNAYKHILIEIPDSKDFSDERRKTKFGQLIDGTEYGEMSLDNEFVNDSDVFIEKRSKNSKFVFSIVYKGMRMGVWVDTQQMLLYLTTDHDPSTKNVYALTADDLEEGMILVSNYKKNYHIRKLCSAFMNGQLRFDNQLMRTIGYEMFKKMRVQ</sequence>
<evidence type="ECO:0000250" key="1">
    <source>
        <dbReference type="UniProtKB" id="P11014"/>
    </source>
</evidence>
<evidence type="ECO:0000255" key="2"/>
<evidence type="ECO:0000305" key="3"/>
<keyword id="KW-0067">ATP-binding</keyword>
<keyword id="KW-0378">Hydrolase</keyword>
<keyword id="KW-0426">Late protein</keyword>
<keyword id="KW-0547">Nucleotide-binding</keyword>
<keyword id="KW-0231">Viral genome packaging</keyword>
<keyword id="KW-1188">Viral release from host cell</keyword>